<name>RRP36_CHAGB</name>
<evidence type="ECO:0000250" key="1"/>
<evidence type="ECO:0000255" key="2"/>
<evidence type="ECO:0000256" key="3">
    <source>
        <dbReference type="SAM" id="MobiDB-lite"/>
    </source>
</evidence>
<evidence type="ECO:0000305" key="4"/>
<sequence length="338" mass="37575">MSSVKRKMPPSSLLQRRVKPRYEPEPESDIEEDVSEGPSEDDVGLSGSEGEEGGELSEDESGSGSDEDNSDAASSSEEEDDEEEQEDDGPPIDASQLSFGALAKAQAAMRSSSSKSQKASDAAKTKEDEGYGHPTKLSSAKKLDKRSNKHAPVELTSKKPVSRKRDFLTSTAETKRPQARDPRFTPLGPGASTAAAGGGSGSTIDEIKARKAYAFLDDYRASEMQELRATIKKTKDAAQREKLQRALLSMESRKKAQDRKDRERAVIEEHRKKEKELVKQGKTPFYLKKSEQKKRVLVDQFQGMKKRQVDKAIERRRKKVAGKEKKMLPMTRRGAEER</sequence>
<dbReference type="EMBL" id="CH408033">
    <property type="protein sequence ID" value="EAQ86026.1"/>
    <property type="molecule type" value="Genomic_DNA"/>
</dbReference>
<dbReference type="RefSeq" id="XP_001224935.1">
    <property type="nucleotide sequence ID" value="XM_001224934.1"/>
</dbReference>
<dbReference type="SMR" id="Q2GXM5"/>
<dbReference type="FunCoup" id="Q2GXM5">
    <property type="interactions" value="472"/>
</dbReference>
<dbReference type="STRING" id="306901.Q2GXM5"/>
<dbReference type="GeneID" id="4394425"/>
<dbReference type="VEuPathDB" id="FungiDB:CHGG_07279"/>
<dbReference type="eggNOG" id="KOG3190">
    <property type="taxonomic scope" value="Eukaryota"/>
</dbReference>
<dbReference type="HOGENOM" id="CLU_048802_0_0_1"/>
<dbReference type="InParanoid" id="Q2GXM5"/>
<dbReference type="OMA" id="ERKEMPW"/>
<dbReference type="OrthoDB" id="448446at2759"/>
<dbReference type="Proteomes" id="UP000001056">
    <property type="component" value="Unassembled WGS sequence"/>
</dbReference>
<dbReference type="GO" id="GO:0030686">
    <property type="term" value="C:90S preribosome"/>
    <property type="evidence" value="ECO:0007669"/>
    <property type="project" value="TreeGrafter"/>
</dbReference>
<dbReference type="GO" id="GO:0005730">
    <property type="term" value="C:nucleolus"/>
    <property type="evidence" value="ECO:0007669"/>
    <property type="project" value="UniProtKB-SubCell"/>
</dbReference>
<dbReference type="GO" id="GO:0000462">
    <property type="term" value="P:maturation of SSU-rRNA from tricistronic rRNA transcript (SSU-rRNA, 5.8S rRNA, LSU-rRNA)"/>
    <property type="evidence" value="ECO:0007669"/>
    <property type="project" value="TreeGrafter"/>
</dbReference>
<dbReference type="InterPro" id="IPR009292">
    <property type="entry name" value="RRP36"/>
</dbReference>
<dbReference type="PANTHER" id="PTHR21738">
    <property type="entry name" value="RIBOSOMAL RNA PROCESSING PROTEIN 36 HOMOLOG"/>
    <property type="match status" value="1"/>
</dbReference>
<dbReference type="PANTHER" id="PTHR21738:SF0">
    <property type="entry name" value="RIBOSOMAL RNA PROCESSING PROTEIN 36 HOMOLOG"/>
    <property type="match status" value="1"/>
</dbReference>
<dbReference type="Pfam" id="PF06102">
    <property type="entry name" value="RRP36"/>
    <property type="match status" value="1"/>
</dbReference>
<comment type="function">
    <text evidence="1">Component of the 90S pre-ribosome involved in the maturation of rRNAs. Required for early cleavages of the pre-RNAs in the 40S ribosomal subunit maturation pathway (By similarity).</text>
</comment>
<comment type="subunit">
    <text evidence="1">Associates with 90S and pre-40S pre-ribosomal particles.</text>
</comment>
<comment type="subcellular location">
    <subcellularLocation>
        <location evidence="1">Nucleus</location>
        <location evidence="1">Nucleolus</location>
    </subcellularLocation>
</comment>
<comment type="similarity">
    <text evidence="4">Belongs to the RRP36 family.</text>
</comment>
<accession>Q2GXM5</accession>
<reference key="1">
    <citation type="journal article" date="2015" name="Genome Announc.">
        <title>Draft genome sequence of the cellulolytic fungus Chaetomium globosum.</title>
        <authorList>
            <person name="Cuomo C.A."/>
            <person name="Untereiner W.A."/>
            <person name="Ma L.-J."/>
            <person name="Grabherr M."/>
            <person name="Birren B.W."/>
        </authorList>
    </citation>
    <scope>NUCLEOTIDE SEQUENCE [LARGE SCALE GENOMIC DNA]</scope>
    <source>
        <strain>ATCC 6205 / CBS 148.51 / DSM 1962 / NBRC 6347 / NRRL 1970</strain>
    </source>
</reference>
<protein>
    <recommendedName>
        <fullName>rRNA biogenesis protein RRP36</fullName>
    </recommendedName>
    <alternativeName>
        <fullName>Ribosomal RNA-processing protein 36</fullName>
    </alternativeName>
</protein>
<proteinExistence type="inferred from homology"/>
<feature type="chain" id="PRO_0000397627" description="rRNA biogenesis protein RRP36">
    <location>
        <begin position="1"/>
        <end position="338"/>
    </location>
</feature>
<feature type="region of interest" description="Disordered" evidence="3">
    <location>
        <begin position="1"/>
        <end position="203"/>
    </location>
</feature>
<feature type="region of interest" description="Disordered" evidence="3">
    <location>
        <begin position="307"/>
        <end position="338"/>
    </location>
</feature>
<feature type="coiled-coil region" evidence="2">
    <location>
        <begin position="221"/>
        <end position="280"/>
    </location>
</feature>
<feature type="compositionally biased region" description="Acidic residues" evidence="3">
    <location>
        <begin position="25"/>
        <end position="90"/>
    </location>
</feature>
<feature type="compositionally biased region" description="Low complexity" evidence="3">
    <location>
        <begin position="103"/>
        <end position="120"/>
    </location>
</feature>
<feature type="compositionally biased region" description="Basic and acidic residues" evidence="3">
    <location>
        <begin position="121"/>
        <end position="131"/>
    </location>
</feature>
<feature type="compositionally biased region" description="Basic and acidic residues" evidence="3">
    <location>
        <begin position="163"/>
        <end position="183"/>
    </location>
</feature>
<feature type="compositionally biased region" description="Basic and acidic residues" evidence="3">
    <location>
        <begin position="321"/>
        <end position="338"/>
    </location>
</feature>
<keyword id="KW-0175">Coiled coil</keyword>
<keyword id="KW-0539">Nucleus</keyword>
<keyword id="KW-1185">Reference proteome</keyword>
<keyword id="KW-0687">Ribonucleoprotein</keyword>
<keyword id="KW-0690">Ribosome biogenesis</keyword>
<keyword id="KW-0698">rRNA processing</keyword>
<organism>
    <name type="scientific">Chaetomium globosum (strain ATCC 6205 / CBS 148.51 / DSM 1962 / NBRC 6347 / NRRL 1970)</name>
    <name type="common">Soil fungus</name>
    <dbReference type="NCBI Taxonomy" id="306901"/>
    <lineage>
        <taxon>Eukaryota</taxon>
        <taxon>Fungi</taxon>
        <taxon>Dikarya</taxon>
        <taxon>Ascomycota</taxon>
        <taxon>Pezizomycotina</taxon>
        <taxon>Sordariomycetes</taxon>
        <taxon>Sordariomycetidae</taxon>
        <taxon>Sordariales</taxon>
        <taxon>Chaetomiaceae</taxon>
        <taxon>Chaetomium</taxon>
    </lineage>
</organism>
<gene>
    <name type="primary">RRP36</name>
    <name type="ORF">CHGG_07279</name>
</gene>